<feature type="chain" id="PRO_0000216934" description="Fructose-bisphosphate aldolase">
    <location>
        <begin position="1"/>
        <end position="363"/>
    </location>
</feature>
<feature type="active site" description="Proton acceptor" evidence="1">
    <location>
        <position position="188"/>
    </location>
</feature>
<feature type="active site" description="Schiff-base intermediate with dihydroxyacetone-P" evidence="1">
    <location>
        <position position="230"/>
    </location>
</feature>
<feature type="binding site" evidence="1">
    <location>
        <position position="56"/>
    </location>
    <ligand>
        <name>substrate</name>
    </ligand>
</feature>
<feature type="binding site" evidence="1">
    <location>
        <position position="147"/>
    </location>
    <ligand>
        <name>substrate</name>
    </ligand>
</feature>
<feature type="site" description="Necessary for preference for fructose 1,6-bisphosphate over fructose 1-phosphate">
    <location>
        <position position="363"/>
    </location>
</feature>
<dbReference type="EC" id="4.1.2.13"/>
<dbReference type="EMBL" id="L38658">
    <property type="protein sequence ID" value="AAA57567.1"/>
    <property type="molecule type" value="mRNA"/>
</dbReference>
<dbReference type="EMBL" id="AF026805">
    <property type="protein sequence ID" value="AAB84014.1"/>
    <property type="molecule type" value="mRNA"/>
</dbReference>
<dbReference type="RefSeq" id="XP_018652294.1">
    <property type="nucleotide sequence ID" value="XM_018797232.1"/>
</dbReference>
<dbReference type="SMR" id="P53442"/>
<dbReference type="FunCoup" id="P53442">
    <property type="interactions" value="782"/>
</dbReference>
<dbReference type="STRING" id="6183.P53442"/>
<dbReference type="EnsemblMetazoa" id="Smp_042160.1">
    <property type="protein sequence ID" value="Smp_042160.1"/>
    <property type="gene ID" value="Smp_042160"/>
</dbReference>
<dbReference type="GeneID" id="8354313"/>
<dbReference type="KEGG" id="smm:Smp_042160.1"/>
<dbReference type="WBParaSite" id="Smp_042160.1">
    <property type="protein sequence ID" value="Smp_042160.1"/>
    <property type="gene ID" value="Smp_042160"/>
</dbReference>
<dbReference type="CTD" id="8354313"/>
<dbReference type="eggNOG" id="KOG1557">
    <property type="taxonomic scope" value="Eukaryota"/>
</dbReference>
<dbReference type="InParanoid" id="P53442"/>
<dbReference type="OMA" id="GDAMQKW"/>
<dbReference type="OrthoDB" id="36455at2759"/>
<dbReference type="PhylomeDB" id="P53442"/>
<dbReference type="BRENDA" id="4.1.2.13">
    <property type="organism ID" value="5608"/>
</dbReference>
<dbReference type="UniPathway" id="UPA00109">
    <property type="reaction ID" value="UER00183"/>
</dbReference>
<dbReference type="Proteomes" id="UP000008854">
    <property type="component" value="Unassembled WGS sequence"/>
</dbReference>
<dbReference type="ExpressionAtlas" id="P53442">
    <property type="expression patterns" value="baseline and differential"/>
</dbReference>
<dbReference type="GO" id="GO:0004332">
    <property type="term" value="F:fructose-bisphosphate aldolase activity"/>
    <property type="evidence" value="ECO:0007669"/>
    <property type="project" value="UniProtKB-EC"/>
</dbReference>
<dbReference type="GO" id="GO:0006096">
    <property type="term" value="P:glycolytic process"/>
    <property type="evidence" value="ECO:0007669"/>
    <property type="project" value="UniProtKB-UniPathway"/>
</dbReference>
<dbReference type="CDD" id="cd00948">
    <property type="entry name" value="FBP_aldolase_I_a"/>
    <property type="match status" value="1"/>
</dbReference>
<dbReference type="FunFam" id="3.20.20.70:FF:000140">
    <property type="entry name" value="Fructose-bisphosphate aldolase"/>
    <property type="match status" value="1"/>
</dbReference>
<dbReference type="Gene3D" id="3.20.20.70">
    <property type="entry name" value="Aldolase class I"/>
    <property type="match status" value="1"/>
</dbReference>
<dbReference type="InterPro" id="IPR029768">
    <property type="entry name" value="Aldolase_I_AS"/>
</dbReference>
<dbReference type="InterPro" id="IPR013785">
    <property type="entry name" value="Aldolase_TIM"/>
</dbReference>
<dbReference type="InterPro" id="IPR000741">
    <property type="entry name" value="FBA_I"/>
</dbReference>
<dbReference type="NCBIfam" id="NF033379">
    <property type="entry name" value="FrucBisAld_I"/>
    <property type="match status" value="1"/>
</dbReference>
<dbReference type="PANTHER" id="PTHR11627">
    <property type="entry name" value="FRUCTOSE-BISPHOSPHATE ALDOLASE"/>
    <property type="match status" value="1"/>
</dbReference>
<dbReference type="Pfam" id="PF00274">
    <property type="entry name" value="Glycolytic"/>
    <property type="match status" value="1"/>
</dbReference>
<dbReference type="SUPFAM" id="SSF51569">
    <property type="entry name" value="Aldolase"/>
    <property type="match status" value="1"/>
</dbReference>
<dbReference type="PROSITE" id="PS00158">
    <property type="entry name" value="ALDOLASE_CLASS_I"/>
    <property type="match status" value="1"/>
</dbReference>
<accession>P53442</accession>
<protein>
    <recommendedName>
        <fullName>Fructose-bisphosphate aldolase</fullName>
        <ecNumber>4.1.2.13</ecNumber>
    </recommendedName>
</protein>
<name>ALF_SCHMA</name>
<sequence>MSRFQPYLTEAQENDLRRIAQAICAPGKGILAADESTATMGKRLQQIGVENNEENRRLYRQLLFSADHKLAENISGVILFEETLHQKSDDGKTLPTLLAERNIIPGIKVDKGVVPLAGTDNETTTQGLDDLASRCAEYWRLGCRFAKWRCVLKISSHTPSYLAMLENANVLARYASICQQNGLVPIVEPEVLPDGDHDLLTAQRVTEQVLAFVYKALADHHVYLEGTLLKPNMVTAGQACKKAYTPQENALATVRALQRTVPPAVPGITFLSGGQSELDATKNLNEINKIPGPKPWALTFSFGRALQASVLATWKGKKENVHAAQEELLKLAKANGAAAVGKFEGNMGTTLGDKSLFVANHAY</sequence>
<organism>
    <name type="scientific">Schistosoma mansoni</name>
    <name type="common">Blood fluke</name>
    <dbReference type="NCBI Taxonomy" id="6183"/>
    <lineage>
        <taxon>Eukaryota</taxon>
        <taxon>Metazoa</taxon>
        <taxon>Spiralia</taxon>
        <taxon>Lophotrochozoa</taxon>
        <taxon>Platyhelminthes</taxon>
        <taxon>Trematoda</taxon>
        <taxon>Digenea</taxon>
        <taxon>Strigeidida</taxon>
        <taxon>Schistosomatoidea</taxon>
        <taxon>Schistosomatidae</taxon>
        <taxon>Schistosoma</taxon>
    </lineage>
</organism>
<proteinExistence type="evidence at transcript level"/>
<comment type="catalytic activity">
    <reaction>
        <text>beta-D-fructose 1,6-bisphosphate = D-glyceraldehyde 3-phosphate + dihydroxyacetone phosphate</text>
        <dbReference type="Rhea" id="RHEA:14729"/>
        <dbReference type="ChEBI" id="CHEBI:32966"/>
        <dbReference type="ChEBI" id="CHEBI:57642"/>
        <dbReference type="ChEBI" id="CHEBI:59776"/>
        <dbReference type="EC" id="4.1.2.13"/>
    </reaction>
</comment>
<comment type="pathway">
    <text>Carbohydrate degradation; glycolysis; D-glyceraldehyde 3-phosphate and glycerone phosphate from D-glucose: step 4/4.</text>
</comment>
<comment type="similarity">
    <text evidence="2">Belongs to the class I fructose-bisphosphate aldolase family.</text>
</comment>
<evidence type="ECO:0000250" key="1"/>
<evidence type="ECO:0000305" key="2"/>
<reference key="1">
    <citation type="journal article" date="1998" name="J. Parasitol.">
        <title>Cloning and characterization of Schistosoma mansoni fructose-1,6-bisphosphate aldolase isoenzyme.</title>
        <authorList>
            <person name="El-Dabaa E."/>
            <person name="Mei H."/>
            <person name="El-Sayed A."/>
            <person name="Karim A.M."/>
            <person name="Eldesoky H.M."/>
            <person name="Fahim F.A."/>
            <person name="Loverde P.T."/>
            <person name="Saber M.A."/>
        </authorList>
    </citation>
    <scope>NUCLEOTIDE SEQUENCE [MRNA]</scope>
    <source>
        <strain>Puerto Rican</strain>
    </source>
</reference>
<reference key="2">
    <citation type="submission" date="1997-11" db="EMBL/GenBank/DDBJ databases">
        <authorList>
            <person name="Harrison R.A."/>
            <person name="Culpepper J.C."/>
            <person name="Newport G.R."/>
            <person name="Doenhoff M.J."/>
        </authorList>
    </citation>
    <scope>NUCLEOTIDE SEQUENCE [MRNA]</scope>
    <source>
        <strain>Puerto Rican</strain>
    </source>
</reference>
<keyword id="KW-0324">Glycolysis</keyword>
<keyword id="KW-0456">Lyase</keyword>
<keyword id="KW-1185">Reference proteome</keyword>
<keyword id="KW-0704">Schiff base</keyword>